<organism>
    <name type="scientific">Mycobacterium bovis (strain BCG / Pasteur 1173P2)</name>
    <dbReference type="NCBI Taxonomy" id="410289"/>
    <lineage>
        <taxon>Bacteria</taxon>
        <taxon>Bacillati</taxon>
        <taxon>Actinomycetota</taxon>
        <taxon>Actinomycetes</taxon>
        <taxon>Mycobacteriales</taxon>
        <taxon>Mycobacteriaceae</taxon>
        <taxon>Mycobacterium</taxon>
        <taxon>Mycobacterium tuberculosis complex</taxon>
    </lineage>
</organism>
<dbReference type="EC" id="2.7.2.8" evidence="1"/>
<dbReference type="EMBL" id="AM408590">
    <property type="protein sequence ID" value="CAL71680.1"/>
    <property type="molecule type" value="Genomic_DNA"/>
</dbReference>
<dbReference type="RefSeq" id="WP_003408161.1">
    <property type="nucleotide sequence ID" value="NC_008769.1"/>
</dbReference>
<dbReference type="SMR" id="A1KJ71"/>
<dbReference type="KEGG" id="mbb:BCG_1693"/>
<dbReference type="HOGENOM" id="CLU_053680_0_1_11"/>
<dbReference type="UniPathway" id="UPA00068">
    <property type="reaction ID" value="UER00107"/>
</dbReference>
<dbReference type="Proteomes" id="UP000001472">
    <property type="component" value="Chromosome"/>
</dbReference>
<dbReference type="GO" id="GO:0005737">
    <property type="term" value="C:cytoplasm"/>
    <property type="evidence" value="ECO:0007669"/>
    <property type="project" value="UniProtKB-SubCell"/>
</dbReference>
<dbReference type="GO" id="GO:0003991">
    <property type="term" value="F:acetylglutamate kinase activity"/>
    <property type="evidence" value="ECO:0007669"/>
    <property type="project" value="UniProtKB-UniRule"/>
</dbReference>
<dbReference type="GO" id="GO:0005524">
    <property type="term" value="F:ATP binding"/>
    <property type="evidence" value="ECO:0007669"/>
    <property type="project" value="UniProtKB-UniRule"/>
</dbReference>
<dbReference type="GO" id="GO:0042450">
    <property type="term" value="P:arginine biosynthetic process via ornithine"/>
    <property type="evidence" value="ECO:0007669"/>
    <property type="project" value="UniProtKB-UniRule"/>
</dbReference>
<dbReference type="GO" id="GO:0006526">
    <property type="term" value="P:L-arginine biosynthetic process"/>
    <property type="evidence" value="ECO:0007669"/>
    <property type="project" value="UniProtKB-UniPathway"/>
</dbReference>
<dbReference type="CDD" id="cd04250">
    <property type="entry name" value="AAK_NAGK-C"/>
    <property type="match status" value="1"/>
</dbReference>
<dbReference type="FunFam" id="3.40.1160.10:FF:000015">
    <property type="entry name" value="Acetylglutamate kinase"/>
    <property type="match status" value="1"/>
</dbReference>
<dbReference type="Gene3D" id="3.40.1160.10">
    <property type="entry name" value="Acetylglutamate kinase-like"/>
    <property type="match status" value="1"/>
</dbReference>
<dbReference type="HAMAP" id="MF_00082">
    <property type="entry name" value="ArgB"/>
    <property type="match status" value="1"/>
</dbReference>
<dbReference type="InterPro" id="IPR036393">
    <property type="entry name" value="AceGlu_kinase-like_sf"/>
</dbReference>
<dbReference type="InterPro" id="IPR004662">
    <property type="entry name" value="AcgluKinase_fam"/>
</dbReference>
<dbReference type="InterPro" id="IPR037528">
    <property type="entry name" value="ArgB"/>
</dbReference>
<dbReference type="InterPro" id="IPR001048">
    <property type="entry name" value="Asp/Glu/Uridylate_kinase"/>
</dbReference>
<dbReference type="InterPro" id="IPR001057">
    <property type="entry name" value="Glu/AcGlu_kinase"/>
</dbReference>
<dbReference type="InterPro" id="IPR041727">
    <property type="entry name" value="NAGK-C"/>
</dbReference>
<dbReference type="NCBIfam" id="TIGR00761">
    <property type="entry name" value="argB"/>
    <property type="match status" value="1"/>
</dbReference>
<dbReference type="PANTHER" id="PTHR23342">
    <property type="entry name" value="N-ACETYLGLUTAMATE SYNTHASE"/>
    <property type="match status" value="1"/>
</dbReference>
<dbReference type="PANTHER" id="PTHR23342:SF0">
    <property type="entry name" value="N-ACETYLGLUTAMATE SYNTHASE, MITOCHONDRIAL"/>
    <property type="match status" value="1"/>
</dbReference>
<dbReference type="Pfam" id="PF00696">
    <property type="entry name" value="AA_kinase"/>
    <property type="match status" value="1"/>
</dbReference>
<dbReference type="PIRSF" id="PIRSF000728">
    <property type="entry name" value="NAGK"/>
    <property type="match status" value="1"/>
</dbReference>
<dbReference type="PRINTS" id="PR00474">
    <property type="entry name" value="GLU5KINASE"/>
</dbReference>
<dbReference type="SUPFAM" id="SSF53633">
    <property type="entry name" value="Carbamate kinase-like"/>
    <property type="match status" value="1"/>
</dbReference>
<accession>A1KJ71</accession>
<name>ARGB_MYCBP</name>
<proteinExistence type="inferred from homology"/>
<sequence length="294" mass="30937">MSRIEALPTHIKAQVLAEALPWLKQLHGKVVVVKYGGNAMTDDTLRRAFAADMAFLRNCGIHPVVVHGGGPQITAMLRRLGIEGDFKGGFRVTTPEVLDVARMVLFGQVGRELVNLINAHGPYAVGITGEDAQLFTAVRRSVTVDGVATDIGLVGDVDQVNTAAMLDLVAAGRIPVVSTLAPDADGVVHNINADTAAAAVAEALGAEKLLMLTDIDGLYTRWPDRDSLVSEIDTGTLAQLLPTLESGMVPKVEACLRAVIGGVPSAHIIDGRVTHCVLVELFTDAGTGTKVVRG</sequence>
<keyword id="KW-0028">Amino-acid biosynthesis</keyword>
<keyword id="KW-0055">Arginine biosynthesis</keyword>
<keyword id="KW-0067">ATP-binding</keyword>
<keyword id="KW-0963">Cytoplasm</keyword>
<keyword id="KW-0418">Kinase</keyword>
<keyword id="KW-0547">Nucleotide-binding</keyword>
<keyword id="KW-0808">Transferase</keyword>
<feature type="chain" id="PRO_1000010512" description="Acetylglutamate kinase">
    <location>
        <begin position="1"/>
        <end position="294"/>
    </location>
</feature>
<feature type="binding site" evidence="1">
    <location>
        <begin position="69"/>
        <end position="70"/>
    </location>
    <ligand>
        <name>substrate</name>
    </ligand>
</feature>
<feature type="binding site" evidence="1">
    <location>
        <position position="91"/>
    </location>
    <ligand>
        <name>substrate</name>
    </ligand>
</feature>
<feature type="binding site" evidence="1">
    <location>
        <position position="190"/>
    </location>
    <ligand>
        <name>substrate</name>
    </ligand>
</feature>
<feature type="site" description="Transition state stabilizer" evidence="1">
    <location>
        <position position="34"/>
    </location>
</feature>
<feature type="site" description="Transition state stabilizer" evidence="1">
    <location>
        <position position="251"/>
    </location>
</feature>
<comment type="function">
    <text evidence="1">Catalyzes the ATP-dependent phosphorylation of N-acetyl-L-glutamate.</text>
</comment>
<comment type="catalytic activity">
    <reaction evidence="1">
        <text>N-acetyl-L-glutamate + ATP = N-acetyl-L-glutamyl 5-phosphate + ADP</text>
        <dbReference type="Rhea" id="RHEA:14629"/>
        <dbReference type="ChEBI" id="CHEBI:30616"/>
        <dbReference type="ChEBI" id="CHEBI:44337"/>
        <dbReference type="ChEBI" id="CHEBI:57936"/>
        <dbReference type="ChEBI" id="CHEBI:456216"/>
        <dbReference type="EC" id="2.7.2.8"/>
    </reaction>
</comment>
<comment type="pathway">
    <text evidence="1">Amino-acid biosynthesis; L-arginine biosynthesis; N(2)-acetyl-L-ornithine from L-glutamate: step 2/4.</text>
</comment>
<comment type="subcellular location">
    <subcellularLocation>
        <location evidence="1">Cytoplasm</location>
    </subcellularLocation>
</comment>
<comment type="similarity">
    <text evidence="1">Belongs to the acetylglutamate kinase family. ArgB subfamily.</text>
</comment>
<reference key="1">
    <citation type="journal article" date="2007" name="Proc. Natl. Acad. Sci. U.S.A.">
        <title>Genome plasticity of BCG and impact on vaccine efficacy.</title>
        <authorList>
            <person name="Brosch R."/>
            <person name="Gordon S.V."/>
            <person name="Garnier T."/>
            <person name="Eiglmeier K."/>
            <person name="Frigui W."/>
            <person name="Valenti P."/>
            <person name="Dos Santos S."/>
            <person name="Duthoy S."/>
            <person name="Lacroix C."/>
            <person name="Garcia-Pelayo C."/>
            <person name="Inwald J.K."/>
            <person name="Golby P."/>
            <person name="Garcia J.N."/>
            <person name="Hewinson R.G."/>
            <person name="Behr M.A."/>
            <person name="Quail M.A."/>
            <person name="Churcher C."/>
            <person name="Barrell B.G."/>
            <person name="Parkhill J."/>
            <person name="Cole S.T."/>
        </authorList>
    </citation>
    <scope>NUCLEOTIDE SEQUENCE [LARGE SCALE GENOMIC DNA]</scope>
    <source>
        <strain>BCG / Pasteur 1173P2</strain>
    </source>
</reference>
<gene>
    <name evidence="1" type="primary">argB</name>
    <name type="ordered locus">BCG_1693</name>
</gene>
<evidence type="ECO:0000255" key="1">
    <source>
        <dbReference type="HAMAP-Rule" id="MF_00082"/>
    </source>
</evidence>
<protein>
    <recommendedName>
        <fullName evidence="1">Acetylglutamate kinase</fullName>
        <ecNumber evidence="1">2.7.2.8</ecNumber>
    </recommendedName>
    <alternativeName>
        <fullName evidence="1">N-acetyl-L-glutamate 5-phosphotransferase</fullName>
    </alternativeName>
    <alternativeName>
        <fullName evidence="1">NAG kinase</fullName>
        <shortName evidence="1">NAGK</shortName>
    </alternativeName>
</protein>